<gene>
    <name evidence="1" type="primary">ndk</name>
    <name type="ordered locus">Swit_0030</name>
</gene>
<accession>A5V287</accession>
<evidence type="ECO:0000255" key="1">
    <source>
        <dbReference type="HAMAP-Rule" id="MF_00451"/>
    </source>
</evidence>
<sequence>MATERTFSIIKPDATRRNLTGAITAKLEEAGLRVVASKRIHMTKEQAEGFYGVHRERPFFGDLVSFMISGPVVVQVLEGENAVARNREVMGATNPANADEGTIRKTFAESIEANSVHGSDSAENAKIEIDFFFKPEEIVG</sequence>
<dbReference type="EC" id="2.7.4.6" evidence="1"/>
<dbReference type="EMBL" id="CP000699">
    <property type="protein sequence ID" value="ABQ66403.1"/>
    <property type="molecule type" value="Genomic_DNA"/>
</dbReference>
<dbReference type="SMR" id="A5V287"/>
<dbReference type="STRING" id="392499.Swit_0030"/>
<dbReference type="PaxDb" id="392499-Swit_0030"/>
<dbReference type="KEGG" id="swi:Swit_0030"/>
<dbReference type="eggNOG" id="COG0105">
    <property type="taxonomic scope" value="Bacteria"/>
</dbReference>
<dbReference type="HOGENOM" id="CLU_060216_8_1_5"/>
<dbReference type="OrthoDB" id="9801161at2"/>
<dbReference type="Proteomes" id="UP000001989">
    <property type="component" value="Chromosome"/>
</dbReference>
<dbReference type="GO" id="GO:0005737">
    <property type="term" value="C:cytoplasm"/>
    <property type="evidence" value="ECO:0007669"/>
    <property type="project" value="UniProtKB-SubCell"/>
</dbReference>
<dbReference type="GO" id="GO:0005524">
    <property type="term" value="F:ATP binding"/>
    <property type="evidence" value="ECO:0007669"/>
    <property type="project" value="UniProtKB-UniRule"/>
</dbReference>
<dbReference type="GO" id="GO:0046872">
    <property type="term" value="F:metal ion binding"/>
    <property type="evidence" value="ECO:0007669"/>
    <property type="project" value="UniProtKB-KW"/>
</dbReference>
<dbReference type="GO" id="GO:0004550">
    <property type="term" value="F:nucleoside diphosphate kinase activity"/>
    <property type="evidence" value="ECO:0007669"/>
    <property type="project" value="UniProtKB-UniRule"/>
</dbReference>
<dbReference type="GO" id="GO:0006241">
    <property type="term" value="P:CTP biosynthetic process"/>
    <property type="evidence" value="ECO:0007669"/>
    <property type="project" value="UniProtKB-UniRule"/>
</dbReference>
<dbReference type="GO" id="GO:0006183">
    <property type="term" value="P:GTP biosynthetic process"/>
    <property type="evidence" value="ECO:0007669"/>
    <property type="project" value="UniProtKB-UniRule"/>
</dbReference>
<dbReference type="GO" id="GO:0006228">
    <property type="term" value="P:UTP biosynthetic process"/>
    <property type="evidence" value="ECO:0007669"/>
    <property type="project" value="UniProtKB-UniRule"/>
</dbReference>
<dbReference type="CDD" id="cd04413">
    <property type="entry name" value="NDPk_I"/>
    <property type="match status" value="1"/>
</dbReference>
<dbReference type="FunFam" id="3.30.70.141:FF:000001">
    <property type="entry name" value="Nucleoside diphosphate kinase"/>
    <property type="match status" value="1"/>
</dbReference>
<dbReference type="Gene3D" id="3.30.70.141">
    <property type="entry name" value="Nucleoside diphosphate kinase-like domain"/>
    <property type="match status" value="1"/>
</dbReference>
<dbReference type="HAMAP" id="MF_00451">
    <property type="entry name" value="NDP_kinase"/>
    <property type="match status" value="1"/>
</dbReference>
<dbReference type="InterPro" id="IPR034907">
    <property type="entry name" value="NDK-like_dom"/>
</dbReference>
<dbReference type="InterPro" id="IPR036850">
    <property type="entry name" value="NDK-like_dom_sf"/>
</dbReference>
<dbReference type="InterPro" id="IPR001564">
    <property type="entry name" value="Nucleoside_diP_kinase"/>
</dbReference>
<dbReference type="NCBIfam" id="NF001908">
    <property type="entry name" value="PRK00668.1"/>
    <property type="match status" value="1"/>
</dbReference>
<dbReference type="PANTHER" id="PTHR11349">
    <property type="entry name" value="NUCLEOSIDE DIPHOSPHATE KINASE"/>
    <property type="match status" value="1"/>
</dbReference>
<dbReference type="Pfam" id="PF00334">
    <property type="entry name" value="NDK"/>
    <property type="match status" value="1"/>
</dbReference>
<dbReference type="PRINTS" id="PR01243">
    <property type="entry name" value="NUCDPKINASE"/>
</dbReference>
<dbReference type="SMART" id="SM00562">
    <property type="entry name" value="NDK"/>
    <property type="match status" value="1"/>
</dbReference>
<dbReference type="SUPFAM" id="SSF54919">
    <property type="entry name" value="Nucleoside diphosphate kinase, NDK"/>
    <property type="match status" value="1"/>
</dbReference>
<dbReference type="PROSITE" id="PS51374">
    <property type="entry name" value="NDPK_LIKE"/>
    <property type="match status" value="1"/>
</dbReference>
<organism>
    <name type="scientific">Rhizorhabdus wittichii (strain DSM 6014 / CCUG 31198 / JCM 15750 / NBRC 105917 / EY 4224 / RW1)</name>
    <name type="common">Sphingomonas wittichii</name>
    <dbReference type="NCBI Taxonomy" id="392499"/>
    <lineage>
        <taxon>Bacteria</taxon>
        <taxon>Pseudomonadati</taxon>
        <taxon>Pseudomonadota</taxon>
        <taxon>Alphaproteobacteria</taxon>
        <taxon>Sphingomonadales</taxon>
        <taxon>Sphingomonadaceae</taxon>
        <taxon>Rhizorhabdus</taxon>
    </lineage>
</organism>
<proteinExistence type="inferred from homology"/>
<protein>
    <recommendedName>
        <fullName evidence="1">Nucleoside diphosphate kinase</fullName>
        <shortName evidence="1">NDK</shortName>
        <shortName evidence="1">NDP kinase</shortName>
        <ecNumber evidence="1">2.7.4.6</ecNumber>
    </recommendedName>
    <alternativeName>
        <fullName evidence="1">Nucleoside-2-P kinase</fullName>
    </alternativeName>
</protein>
<feature type="chain" id="PRO_1000026300" description="Nucleoside diphosphate kinase">
    <location>
        <begin position="1"/>
        <end position="140"/>
    </location>
</feature>
<feature type="active site" description="Pros-phosphohistidine intermediate" evidence="1">
    <location>
        <position position="117"/>
    </location>
</feature>
<feature type="binding site" evidence="1">
    <location>
        <position position="11"/>
    </location>
    <ligand>
        <name>ATP</name>
        <dbReference type="ChEBI" id="CHEBI:30616"/>
    </ligand>
</feature>
<feature type="binding site" evidence="1">
    <location>
        <position position="59"/>
    </location>
    <ligand>
        <name>ATP</name>
        <dbReference type="ChEBI" id="CHEBI:30616"/>
    </ligand>
</feature>
<feature type="binding site" evidence="1">
    <location>
        <position position="87"/>
    </location>
    <ligand>
        <name>ATP</name>
        <dbReference type="ChEBI" id="CHEBI:30616"/>
    </ligand>
</feature>
<feature type="binding site" evidence="1">
    <location>
        <position position="93"/>
    </location>
    <ligand>
        <name>ATP</name>
        <dbReference type="ChEBI" id="CHEBI:30616"/>
    </ligand>
</feature>
<feature type="binding site" evidence="1">
    <location>
        <position position="104"/>
    </location>
    <ligand>
        <name>ATP</name>
        <dbReference type="ChEBI" id="CHEBI:30616"/>
    </ligand>
</feature>
<feature type="binding site" evidence="1">
    <location>
        <position position="114"/>
    </location>
    <ligand>
        <name>ATP</name>
        <dbReference type="ChEBI" id="CHEBI:30616"/>
    </ligand>
</feature>
<name>NDK_RHIWR</name>
<keyword id="KW-0067">ATP-binding</keyword>
<keyword id="KW-0963">Cytoplasm</keyword>
<keyword id="KW-0418">Kinase</keyword>
<keyword id="KW-0460">Magnesium</keyword>
<keyword id="KW-0479">Metal-binding</keyword>
<keyword id="KW-0546">Nucleotide metabolism</keyword>
<keyword id="KW-0547">Nucleotide-binding</keyword>
<keyword id="KW-0597">Phosphoprotein</keyword>
<keyword id="KW-1185">Reference proteome</keyword>
<keyword id="KW-0808">Transferase</keyword>
<reference key="1">
    <citation type="journal article" date="2010" name="J. Bacteriol.">
        <title>Genome sequence of the dioxin-mineralizing bacterium Sphingomonas wittichii RW1.</title>
        <authorList>
            <person name="Miller T.R."/>
            <person name="Delcher A.L."/>
            <person name="Salzberg S.L."/>
            <person name="Saunders E."/>
            <person name="Detter J.C."/>
            <person name="Halden R.U."/>
        </authorList>
    </citation>
    <scope>NUCLEOTIDE SEQUENCE [LARGE SCALE GENOMIC DNA]</scope>
    <source>
        <strain>DSM 6014 / CCUG 31198 / JCM 15750 / NBRC 105917 / EY 4224 / RW1</strain>
    </source>
</reference>
<comment type="function">
    <text evidence="1">Major role in the synthesis of nucleoside triphosphates other than ATP. The ATP gamma phosphate is transferred to the NDP beta phosphate via a ping-pong mechanism, using a phosphorylated active-site intermediate.</text>
</comment>
<comment type="catalytic activity">
    <reaction evidence="1">
        <text>a 2'-deoxyribonucleoside 5'-diphosphate + ATP = a 2'-deoxyribonucleoside 5'-triphosphate + ADP</text>
        <dbReference type="Rhea" id="RHEA:44640"/>
        <dbReference type="ChEBI" id="CHEBI:30616"/>
        <dbReference type="ChEBI" id="CHEBI:61560"/>
        <dbReference type="ChEBI" id="CHEBI:73316"/>
        <dbReference type="ChEBI" id="CHEBI:456216"/>
        <dbReference type="EC" id="2.7.4.6"/>
    </reaction>
</comment>
<comment type="catalytic activity">
    <reaction evidence="1">
        <text>a ribonucleoside 5'-diphosphate + ATP = a ribonucleoside 5'-triphosphate + ADP</text>
        <dbReference type="Rhea" id="RHEA:18113"/>
        <dbReference type="ChEBI" id="CHEBI:30616"/>
        <dbReference type="ChEBI" id="CHEBI:57930"/>
        <dbReference type="ChEBI" id="CHEBI:61557"/>
        <dbReference type="ChEBI" id="CHEBI:456216"/>
        <dbReference type="EC" id="2.7.4.6"/>
    </reaction>
</comment>
<comment type="cofactor">
    <cofactor evidence="1">
        <name>Mg(2+)</name>
        <dbReference type="ChEBI" id="CHEBI:18420"/>
    </cofactor>
</comment>
<comment type="subunit">
    <text evidence="1">Homotetramer.</text>
</comment>
<comment type="subcellular location">
    <subcellularLocation>
        <location evidence="1">Cytoplasm</location>
    </subcellularLocation>
</comment>
<comment type="similarity">
    <text evidence="1">Belongs to the NDK family.</text>
</comment>